<name>SYE_FRATM</name>
<gene>
    <name evidence="1" type="primary">gltX</name>
    <name type="ordered locus">FTM_1545</name>
</gene>
<accession>B2SE01</accession>
<sequence length="468" mass="52939">MITTRFAPSPTGFLHVGGVRTALFSWLYAKNNNGKFILRIEDTDLERSTQEAVDAILDGMSWLGLKNDGEIYYQTKRFDRYKEVIQELIADGKAYYCSCSKERLEELREYQQANNLKTGYDGKCRDANYIPQQGESYVVRFKNPQDGVVSWDDAVKGRISISNHELDDMIIQRADGSPTYNFCVVVDDIDMAITHIIRGDDHVNNTPKQINIYKALNANVPVFAHVPMILGPDGAKLSKRHGAVNVMQYREDGYLPQAILNYLVRLGWSHGDQEIFSIEEMIKAFNLEHINASPSRFDFEKLKWLNKHYIKESKFDDIQTEVEYHFAKTGLDISNGPDLKELVAVMAEKVDTLVELAEKSSYFYSDDISYDENAVKKHIKASTGEIFVKLLENFEALDAQQWQDPDVLHNIVSTTAEQCQVGMGKVGMPLRVAITGSGQSPDIGITLKLLGKNKVVARLTKALEELCK</sequence>
<dbReference type="EC" id="6.1.1.17" evidence="1"/>
<dbReference type="EMBL" id="CP000915">
    <property type="protein sequence ID" value="ACD31365.1"/>
    <property type="molecule type" value="Genomic_DNA"/>
</dbReference>
<dbReference type="SMR" id="B2SE01"/>
<dbReference type="KEGG" id="ftm:FTM_1545"/>
<dbReference type="HOGENOM" id="CLU_015768_6_0_6"/>
<dbReference type="GO" id="GO:0005829">
    <property type="term" value="C:cytosol"/>
    <property type="evidence" value="ECO:0007669"/>
    <property type="project" value="TreeGrafter"/>
</dbReference>
<dbReference type="GO" id="GO:0005524">
    <property type="term" value="F:ATP binding"/>
    <property type="evidence" value="ECO:0007669"/>
    <property type="project" value="UniProtKB-UniRule"/>
</dbReference>
<dbReference type="GO" id="GO:0004818">
    <property type="term" value="F:glutamate-tRNA ligase activity"/>
    <property type="evidence" value="ECO:0007669"/>
    <property type="project" value="UniProtKB-UniRule"/>
</dbReference>
<dbReference type="GO" id="GO:0000049">
    <property type="term" value="F:tRNA binding"/>
    <property type="evidence" value="ECO:0007669"/>
    <property type="project" value="InterPro"/>
</dbReference>
<dbReference type="GO" id="GO:0008270">
    <property type="term" value="F:zinc ion binding"/>
    <property type="evidence" value="ECO:0007669"/>
    <property type="project" value="UniProtKB-UniRule"/>
</dbReference>
<dbReference type="GO" id="GO:0006424">
    <property type="term" value="P:glutamyl-tRNA aminoacylation"/>
    <property type="evidence" value="ECO:0007669"/>
    <property type="project" value="UniProtKB-UniRule"/>
</dbReference>
<dbReference type="CDD" id="cd00808">
    <property type="entry name" value="GluRS_core"/>
    <property type="match status" value="1"/>
</dbReference>
<dbReference type="FunFam" id="3.40.50.620:FF:000007">
    <property type="entry name" value="Glutamate--tRNA ligase"/>
    <property type="match status" value="1"/>
</dbReference>
<dbReference type="Gene3D" id="1.10.10.350">
    <property type="match status" value="1"/>
</dbReference>
<dbReference type="Gene3D" id="3.40.50.620">
    <property type="entry name" value="HUPs"/>
    <property type="match status" value="1"/>
</dbReference>
<dbReference type="HAMAP" id="MF_00022">
    <property type="entry name" value="Glu_tRNA_synth_type1"/>
    <property type="match status" value="1"/>
</dbReference>
<dbReference type="InterPro" id="IPR045462">
    <property type="entry name" value="aa-tRNA-synth_I_cd-bd"/>
</dbReference>
<dbReference type="InterPro" id="IPR020751">
    <property type="entry name" value="aa-tRNA-synth_I_codon-bd_sub2"/>
</dbReference>
<dbReference type="InterPro" id="IPR001412">
    <property type="entry name" value="aa-tRNA-synth_I_CS"/>
</dbReference>
<dbReference type="InterPro" id="IPR008925">
    <property type="entry name" value="aa_tRNA-synth_I_cd-bd_sf"/>
</dbReference>
<dbReference type="InterPro" id="IPR004527">
    <property type="entry name" value="Glu-tRNA-ligase_bac/mito"/>
</dbReference>
<dbReference type="InterPro" id="IPR000924">
    <property type="entry name" value="Glu/Gln-tRNA-synth"/>
</dbReference>
<dbReference type="InterPro" id="IPR020058">
    <property type="entry name" value="Glu/Gln-tRNA-synth_Ib_cat-dom"/>
</dbReference>
<dbReference type="InterPro" id="IPR049940">
    <property type="entry name" value="GluQ/Sye"/>
</dbReference>
<dbReference type="InterPro" id="IPR033910">
    <property type="entry name" value="GluRS_core"/>
</dbReference>
<dbReference type="InterPro" id="IPR014729">
    <property type="entry name" value="Rossmann-like_a/b/a_fold"/>
</dbReference>
<dbReference type="NCBIfam" id="TIGR00464">
    <property type="entry name" value="gltX_bact"/>
    <property type="match status" value="1"/>
</dbReference>
<dbReference type="PANTHER" id="PTHR43311">
    <property type="entry name" value="GLUTAMATE--TRNA LIGASE"/>
    <property type="match status" value="1"/>
</dbReference>
<dbReference type="PANTHER" id="PTHR43311:SF2">
    <property type="entry name" value="GLUTAMATE--TRNA LIGASE, MITOCHONDRIAL-RELATED"/>
    <property type="match status" value="1"/>
</dbReference>
<dbReference type="Pfam" id="PF19269">
    <property type="entry name" value="Anticodon_2"/>
    <property type="match status" value="1"/>
</dbReference>
<dbReference type="Pfam" id="PF00749">
    <property type="entry name" value="tRNA-synt_1c"/>
    <property type="match status" value="1"/>
</dbReference>
<dbReference type="PRINTS" id="PR00987">
    <property type="entry name" value="TRNASYNTHGLU"/>
</dbReference>
<dbReference type="SUPFAM" id="SSF48163">
    <property type="entry name" value="An anticodon-binding domain of class I aminoacyl-tRNA synthetases"/>
    <property type="match status" value="1"/>
</dbReference>
<dbReference type="SUPFAM" id="SSF52374">
    <property type="entry name" value="Nucleotidylyl transferase"/>
    <property type="match status" value="1"/>
</dbReference>
<dbReference type="PROSITE" id="PS00178">
    <property type="entry name" value="AA_TRNA_LIGASE_I"/>
    <property type="match status" value="1"/>
</dbReference>
<reference key="1">
    <citation type="journal article" date="2009" name="PLoS Pathog.">
        <title>Molecular evolutionary consequences of niche restriction in Francisella tularensis, a facultative intracellular pathogen.</title>
        <authorList>
            <person name="Larsson P."/>
            <person name="Elfsmark D."/>
            <person name="Svensson K."/>
            <person name="Wikstroem P."/>
            <person name="Forsman M."/>
            <person name="Brettin T."/>
            <person name="Keim P."/>
            <person name="Johansson A."/>
        </authorList>
    </citation>
    <scope>NUCLEOTIDE SEQUENCE [LARGE SCALE GENOMIC DNA]</scope>
    <source>
        <strain>FSC147</strain>
    </source>
</reference>
<proteinExistence type="inferred from homology"/>
<feature type="chain" id="PRO_1000090076" description="Glutamate--tRNA ligase">
    <location>
        <begin position="1"/>
        <end position="468"/>
    </location>
</feature>
<feature type="short sequence motif" description="'HIGH' region" evidence="1">
    <location>
        <begin position="8"/>
        <end position="18"/>
    </location>
</feature>
<feature type="short sequence motif" description="'KMSKS' region" evidence="1">
    <location>
        <begin position="236"/>
        <end position="240"/>
    </location>
</feature>
<feature type="binding site" evidence="1">
    <location>
        <position position="97"/>
    </location>
    <ligand>
        <name>Zn(2+)</name>
        <dbReference type="ChEBI" id="CHEBI:29105"/>
    </ligand>
</feature>
<feature type="binding site" evidence="1">
    <location>
        <position position="99"/>
    </location>
    <ligand>
        <name>Zn(2+)</name>
        <dbReference type="ChEBI" id="CHEBI:29105"/>
    </ligand>
</feature>
<feature type="binding site" evidence="1">
    <location>
        <position position="124"/>
    </location>
    <ligand>
        <name>Zn(2+)</name>
        <dbReference type="ChEBI" id="CHEBI:29105"/>
    </ligand>
</feature>
<feature type="binding site" evidence="1">
    <location>
        <position position="126"/>
    </location>
    <ligand>
        <name>Zn(2+)</name>
        <dbReference type="ChEBI" id="CHEBI:29105"/>
    </ligand>
</feature>
<feature type="binding site" evidence="1">
    <location>
        <position position="239"/>
    </location>
    <ligand>
        <name>ATP</name>
        <dbReference type="ChEBI" id="CHEBI:30616"/>
    </ligand>
</feature>
<evidence type="ECO:0000255" key="1">
    <source>
        <dbReference type="HAMAP-Rule" id="MF_00022"/>
    </source>
</evidence>
<keyword id="KW-0030">Aminoacyl-tRNA synthetase</keyword>
<keyword id="KW-0067">ATP-binding</keyword>
<keyword id="KW-0963">Cytoplasm</keyword>
<keyword id="KW-0436">Ligase</keyword>
<keyword id="KW-0479">Metal-binding</keyword>
<keyword id="KW-0547">Nucleotide-binding</keyword>
<keyword id="KW-0648">Protein biosynthesis</keyword>
<keyword id="KW-0862">Zinc</keyword>
<protein>
    <recommendedName>
        <fullName evidence="1">Glutamate--tRNA ligase</fullName>
        <ecNumber evidence="1">6.1.1.17</ecNumber>
    </recommendedName>
    <alternativeName>
        <fullName evidence="1">Glutamyl-tRNA synthetase</fullName>
        <shortName evidence="1">GluRS</shortName>
    </alternativeName>
</protein>
<comment type="function">
    <text evidence="1">Catalyzes the attachment of glutamate to tRNA(Glu) in a two-step reaction: glutamate is first activated by ATP to form Glu-AMP and then transferred to the acceptor end of tRNA(Glu).</text>
</comment>
<comment type="catalytic activity">
    <reaction evidence="1">
        <text>tRNA(Glu) + L-glutamate + ATP = L-glutamyl-tRNA(Glu) + AMP + diphosphate</text>
        <dbReference type="Rhea" id="RHEA:23540"/>
        <dbReference type="Rhea" id="RHEA-COMP:9663"/>
        <dbReference type="Rhea" id="RHEA-COMP:9680"/>
        <dbReference type="ChEBI" id="CHEBI:29985"/>
        <dbReference type="ChEBI" id="CHEBI:30616"/>
        <dbReference type="ChEBI" id="CHEBI:33019"/>
        <dbReference type="ChEBI" id="CHEBI:78442"/>
        <dbReference type="ChEBI" id="CHEBI:78520"/>
        <dbReference type="ChEBI" id="CHEBI:456215"/>
        <dbReference type="EC" id="6.1.1.17"/>
    </reaction>
</comment>
<comment type="cofactor">
    <cofactor evidence="1">
        <name>Zn(2+)</name>
        <dbReference type="ChEBI" id="CHEBI:29105"/>
    </cofactor>
    <text evidence="1">Binds 1 zinc ion per subunit.</text>
</comment>
<comment type="subunit">
    <text evidence="1">Monomer.</text>
</comment>
<comment type="subcellular location">
    <subcellularLocation>
        <location evidence="1">Cytoplasm</location>
    </subcellularLocation>
</comment>
<comment type="similarity">
    <text evidence="1">Belongs to the class-I aminoacyl-tRNA synthetase family. Glutamate--tRNA ligase type 1 subfamily.</text>
</comment>
<organism>
    <name type="scientific">Francisella tularensis subsp. mediasiatica (strain FSC147)</name>
    <dbReference type="NCBI Taxonomy" id="441952"/>
    <lineage>
        <taxon>Bacteria</taxon>
        <taxon>Pseudomonadati</taxon>
        <taxon>Pseudomonadota</taxon>
        <taxon>Gammaproteobacteria</taxon>
        <taxon>Thiotrichales</taxon>
        <taxon>Francisellaceae</taxon>
        <taxon>Francisella</taxon>
    </lineage>
</organism>